<dbReference type="EMBL" id="EF380351">
    <property type="protein sequence ID" value="ABQ45271.1"/>
    <property type="molecule type" value="Genomic_DNA"/>
</dbReference>
<dbReference type="RefSeq" id="YP_001294206.1">
    <property type="nucleotide sequence ID" value="NC_009599.1"/>
</dbReference>
<dbReference type="SMR" id="A6MM58"/>
<dbReference type="GeneID" id="5236839"/>
<dbReference type="GO" id="GO:0009507">
    <property type="term" value="C:chloroplast"/>
    <property type="evidence" value="ECO:0007669"/>
    <property type="project" value="UniProtKB-SubCell"/>
</dbReference>
<dbReference type="GO" id="GO:0005763">
    <property type="term" value="C:mitochondrial small ribosomal subunit"/>
    <property type="evidence" value="ECO:0007669"/>
    <property type="project" value="TreeGrafter"/>
</dbReference>
<dbReference type="GO" id="GO:0070181">
    <property type="term" value="F:small ribosomal subunit rRNA binding"/>
    <property type="evidence" value="ECO:0007669"/>
    <property type="project" value="TreeGrafter"/>
</dbReference>
<dbReference type="GO" id="GO:0003735">
    <property type="term" value="F:structural constituent of ribosome"/>
    <property type="evidence" value="ECO:0007669"/>
    <property type="project" value="InterPro"/>
</dbReference>
<dbReference type="GO" id="GO:0006412">
    <property type="term" value="P:translation"/>
    <property type="evidence" value="ECO:0007669"/>
    <property type="project" value="UniProtKB-UniRule"/>
</dbReference>
<dbReference type="FunFam" id="4.10.640.10:FF:000002">
    <property type="entry name" value="30S ribosomal protein S18, chloroplastic"/>
    <property type="match status" value="1"/>
</dbReference>
<dbReference type="Gene3D" id="4.10.640.10">
    <property type="entry name" value="Ribosomal protein S18"/>
    <property type="match status" value="1"/>
</dbReference>
<dbReference type="HAMAP" id="MF_00270">
    <property type="entry name" value="Ribosomal_bS18"/>
    <property type="match status" value="1"/>
</dbReference>
<dbReference type="InterPro" id="IPR001648">
    <property type="entry name" value="Ribosomal_bS18"/>
</dbReference>
<dbReference type="InterPro" id="IPR018275">
    <property type="entry name" value="Ribosomal_bS18_CS"/>
</dbReference>
<dbReference type="InterPro" id="IPR036870">
    <property type="entry name" value="Ribosomal_bS18_sf"/>
</dbReference>
<dbReference type="NCBIfam" id="TIGR00165">
    <property type="entry name" value="S18"/>
    <property type="match status" value="1"/>
</dbReference>
<dbReference type="PANTHER" id="PTHR13479">
    <property type="entry name" value="30S RIBOSOMAL PROTEIN S18"/>
    <property type="match status" value="1"/>
</dbReference>
<dbReference type="PANTHER" id="PTHR13479:SF40">
    <property type="entry name" value="SMALL RIBOSOMAL SUBUNIT PROTEIN BS18M"/>
    <property type="match status" value="1"/>
</dbReference>
<dbReference type="Pfam" id="PF01084">
    <property type="entry name" value="Ribosomal_S18"/>
    <property type="match status" value="1"/>
</dbReference>
<dbReference type="PRINTS" id="PR00974">
    <property type="entry name" value="RIBOSOMALS18"/>
</dbReference>
<dbReference type="SUPFAM" id="SSF46911">
    <property type="entry name" value="Ribosomal protein S18"/>
    <property type="match status" value="1"/>
</dbReference>
<dbReference type="PROSITE" id="PS00057">
    <property type="entry name" value="RIBOSOMAL_S18"/>
    <property type="match status" value="1"/>
</dbReference>
<proteinExistence type="inferred from homology"/>
<reference key="1">
    <citation type="journal article" date="2007" name="Mol. Phylogenet. Evol.">
        <title>Phylogenetic and evolutionary implications of complete chloroplast genome sequences of four early-diverging angiosperms: Buxus (Buxaceae), Chloranthus (Chloranthaceae), Dioscorea (Dioscoreaceae), and Illicium (Schisandraceae).</title>
        <authorList>
            <person name="Hansen D.R."/>
            <person name="Dastidar S.G."/>
            <person name="Cai Z."/>
            <person name="Penaflor C."/>
            <person name="Kuehl J.V."/>
            <person name="Boore J.L."/>
            <person name="Jansen R.K."/>
        </authorList>
    </citation>
    <scope>NUCLEOTIDE SEQUENCE [LARGE SCALE GENOMIC DNA]</scope>
</reference>
<organism>
    <name type="scientific">Buxus microphylla</name>
    <name type="common">Littleleaf boxwood</name>
    <name type="synonym">Japanese boxwood</name>
    <dbReference type="NCBI Taxonomy" id="153571"/>
    <lineage>
        <taxon>Eukaryota</taxon>
        <taxon>Viridiplantae</taxon>
        <taxon>Streptophyta</taxon>
        <taxon>Embryophyta</taxon>
        <taxon>Tracheophyta</taxon>
        <taxon>Spermatophyta</taxon>
        <taxon>Magnoliopsida</taxon>
        <taxon>Buxales</taxon>
        <taxon>Buxaceae</taxon>
        <taxon>Buxus</taxon>
    </lineage>
</organism>
<sequence length="103" mass="12137">MDKSKRPFLKSKRSFRRRLPPIGSGDRIDYRNMSLISRFISEQGKILSRRVNRLTLKQQRLITIAIKQARILSSLPFLNNEKQFERTEFTARTTGSRTINLNK</sequence>
<evidence type="ECO:0000255" key="1">
    <source>
        <dbReference type="HAMAP-Rule" id="MF_00270"/>
    </source>
</evidence>
<evidence type="ECO:0000305" key="2"/>
<geneLocation type="chloroplast"/>
<protein>
    <recommendedName>
        <fullName evidence="1">Small ribosomal subunit protein bS18c</fullName>
    </recommendedName>
    <alternativeName>
        <fullName evidence="2">30S ribosomal protein S18, chloroplastic</fullName>
    </alternativeName>
</protein>
<gene>
    <name evidence="1" type="primary">rps18</name>
</gene>
<keyword id="KW-0150">Chloroplast</keyword>
<keyword id="KW-0934">Plastid</keyword>
<keyword id="KW-0687">Ribonucleoprotein</keyword>
<keyword id="KW-0689">Ribosomal protein</keyword>
<keyword id="KW-0694">RNA-binding</keyword>
<keyword id="KW-0699">rRNA-binding</keyword>
<feature type="chain" id="PRO_0000345570" description="Small ribosomal subunit protein bS18c">
    <location>
        <begin position="1"/>
        <end position="103"/>
    </location>
</feature>
<accession>A6MM58</accession>
<name>RR18_BUXMI</name>
<comment type="subunit">
    <text evidence="1">Part of the 30S ribosomal subunit.</text>
</comment>
<comment type="subcellular location">
    <subcellularLocation>
        <location>Plastid</location>
        <location>Chloroplast</location>
    </subcellularLocation>
</comment>
<comment type="similarity">
    <text evidence="1">Belongs to the bacterial ribosomal protein bS18 family.</text>
</comment>